<keyword id="KW-0010">Activator</keyword>
<keyword id="KW-0156">Chromatin regulator</keyword>
<keyword id="KW-0963">Cytoplasm</keyword>
<keyword id="KW-0378">Hydrolase</keyword>
<keyword id="KW-0479">Metal-binding</keyword>
<keyword id="KW-0539">Nucleus</keyword>
<keyword id="KW-0645">Protease</keyword>
<keyword id="KW-1185">Reference proteome</keyword>
<keyword id="KW-0788">Thiol protease</keyword>
<keyword id="KW-0804">Transcription</keyword>
<keyword id="KW-0805">Transcription regulation</keyword>
<keyword id="KW-0833">Ubl conjugation pathway</keyword>
<keyword id="KW-0862">Zinc</keyword>
<reference key="1">
    <citation type="journal article" date="2004" name="Genome Res.">
        <title>The status, quality, and expansion of the NIH full-length cDNA project: the Mammalian Gene Collection (MGC).</title>
        <authorList>
            <consortium name="The MGC Project Team"/>
        </authorList>
    </citation>
    <scope>NUCLEOTIDE SEQUENCE [LARGE SCALE MRNA]</scope>
    <source>
        <tissue>Brain</tissue>
    </source>
</reference>
<gene>
    <name type="primary">Usp21</name>
</gene>
<proteinExistence type="evidence at transcript level"/>
<feature type="chain" id="PRO_0000367509" description="Ubiquitin carboxyl-terminal hydrolase 21">
    <location>
        <begin position="1"/>
        <end position="565"/>
    </location>
</feature>
<feature type="domain" description="USP">
    <location>
        <begin position="212"/>
        <end position="558"/>
    </location>
</feature>
<feature type="region of interest" description="Disordered" evidence="5">
    <location>
        <begin position="1"/>
        <end position="128"/>
    </location>
</feature>
<feature type="region of interest" description="Disordered" evidence="5">
    <location>
        <begin position="324"/>
        <end position="347"/>
    </location>
</feature>
<feature type="short sequence motif" description="Nuclear export signal" evidence="2">
    <location>
        <begin position="134"/>
        <end position="152"/>
    </location>
</feature>
<feature type="compositionally biased region" description="Basic and acidic residues" evidence="5">
    <location>
        <begin position="1"/>
        <end position="14"/>
    </location>
</feature>
<feature type="compositionally biased region" description="Basic and acidic residues" evidence="5">
    <location>
        <begin position="58"/>
        <end position="70"/>
    </location>
</feature>
<feature type="compositionally biased region" description="Low complexity" evidence="5">
    <location>
        <begin position="71"/>
        <end position="81"/>
    </location>
</feature>
<feature type="compositionally biased region" description="Polar residues" evidence="5">
    <location>
        <begin position="104"/>
        <end position="116"/>
    </location>
</feature>
<feature type="active site" description="Nucleophile" evidence="3 4">
    <location>
        <position position="221"/>
    </location>
</feature>
<feature type="active site" description="Proton acceptor" evidence="3 4">
    <location>
        <position position="518"/>
    </location>
</feature>
<feature type="binding site" evidence="2">
    <location>
        <position position="384"/>
    </location>
    <ligand>
        <name>Zn(2+)</name>
        <dbReference type="ChEBI" id="CHEBI:29105"/>
    </ligand>
</feature>
<feature type="binding site" evidence="2">
    <location>
        <position position="387"/>
    </location>
    <ligand>
        <name>Zn(2+)</name>
        <dbReference type="ChEBI" id="CHEBI:29105"/>
    </ligand>
</feature>
<feature type="binding site" evidence="2">
    <location>
        <position position="437"/>
    </location>
    <ligand>
        <name>Zn(2+)</name>
        <dbReference type="ChEBI" id="CHEBI:29105"/>
    </ligand>
</feature>
<feature type="binding site" evidence="2">
    <location>
        <position position="440"/>
    </location>
    <ligand>
        <name>Zn(2+)</name>
        <dbReference type="ChEBI" id="CHEBI:29105"/>
    </ligand>
</feature>
<evidence type="ECO:0000250" key="1">
    <source>
        <dbReference type="UniProtKB" id="Q9QZL6"/>
    </source>
</evidence>
<evidence type="ECO:0000250" key="2">
    <source>
        <dbReference type="UniProtKB" id="Q9UK80"/>
    </source>
</evidence>
<evidence type="ECO:0000255" key="3">
    <source>
        <dbReference type="PROSITE-ProRule" id="PRU10092"/>
    </source>
</evidence>
<evidence type="ECO:0000255" key="4">
    <source>
        <dbReference type="PROSITE-ProRule" id="PRU10093"/>
    </source>
</evidence>
<evidence type="ECO:0000256" key="5">
    <source>
        <dbReference type="SAM" id="MobiDB-lite"/>
    </source>
</evidence>
<evidence type="ECO:0000305" key="6"/>
<dbReference type="EC" id="3.4.19.12" evidence="2"/>
<dbReference type="EMBL" id="BC166443">
    <property type="protein sequence ID" value="AAI66443.1"/>
    <property type="molecule type" value="mRNA"/>
</dbReference>
<dbReference type="RefSeq" id="NP_001121110.1">
    <property type="nucleotide sequence ID" value="NM_001127638.2"/>
</dbReference>
<dbReference type="SMR" id="B2GUX4"/>
<dbReference type="FunCoup" id="B2GUX4">
    <property type="interactions" value="660"/>
</dbReference>
<dbReference type="STRING" id="10116.ENSRNOP00000055192"/>
<dbReference type="GlyGen" id="B2GUX4">
    <property type="glycosylation" value="1 site"/>
</dbReference>
<dbReference type="PhosphoSitePlus" id="B2GUX4"/>
<dbReference type="PaxDb" id="10116-ENSRNOP00000055192"/>
<dbReference type="GeneID" id="688466"/>
<dbReference type="KEGG" id="rno:688466"/>
<dbReference type="UCSC" id="RGD:1588822">
    <property type="organism name" value="rat"/>
</dbReference>
<dbReference type="AGR" id="RGD:1588822"/>
<dbReference type="CTD" id="27005"/>
<dbReference type="RGD" id="1588822">
    <property type="gene designation" value="Usp21"/>
</dbReference>
<dbReference type="VEuPathDB" id="HostDB:ENSRNOG00000038347"/>
<dbReference type="eggNOG" id="KOG1868">
    <property type="taxonomic scope" value="Eukaryota"/>
</dbReference>
<dbReference type="HOGENOM" id="CLU_035237_0_0_1"/>
<dbReference type="InParanoid" id="B2GUX4"/>
<dbReference type="PhylomeDB" id="B2GUX4"/>
<dbReference type="Reactome" id="R-RNO-5357786">
    <property type="pathway name" value="TNFR1-induced proapoptotic signaling"/>
</dbReference>
<dbReference type="Reactome" id="R-RNO-5357905">
    <property type="pathway name" value="Regulation of TNFR1 signaling"/>
</dbReference>
<dbReference type="Reactome" id="R-RNO-5357956">
    <property type="pathway name" value="TNFR1-induced NF-kappa-B signaling pathway"/>
</dbReference>
<dbReference type="Reactome" id="R-RNO-5689880">
    <property type="pathway name" value="Ub-specific processing proteases"/>
</dbReference>
<dbReference type="PRO" id="PR:B2GUX4"/>
<dbReference type="Proteomes" id="UP000002494">
    <property type="component" value="Chromosome 13"/>
</dbReference>
<dbReference type="Bgee" id="ENSRNOG00000038347">
    <property type="expression patterns" value="Expressed in thymus and 20 other cell types or tissues"/>
</dbReference>
<dbReference type="GO" id="GO:0005737">
    <property type="term" value="C:cytoplasm"/>
    <property type="evidence" value="ECO:0000318"/>
    <property type="project" value="GO_Central"/>
</dbReference>
<dbReference type="GO" id="GO:0005634">
    <property type="term" value="C:nucleus"/>
    <property type="evidence" value="ECO:0007669"/>
    <property type="project" value="UniProtKB-SubCell"/>
</dbReference>
<dbReference type="GO" id="GO:0004843">
    <property type="term" value="F:cysteine-type deubiquitinase activity"/>
    <property type="evidence" value="ECO:0000250"/>
    <property type="project" value="UniProtKB"/>
</dbReference>
<dbReference type="GO" id="GO:0008234">
    <property type="term" value="F:cysteine-type peptidase activity"/>
    <property type="evidence" value="ECO:0000250"/>
    <property type="project" value="UniProtKB"/>
</dbReference>
<dbReference type="GO" id="GO:0019784">
    <property type="term" value="F:deNEDDylase activity"/>
    <property type="evidence" value="ECO:0000250"/>
    <property type="project" value="UniProtKB"/>
</dbReference>
<dbReference type="GO" id="GO:0046872">
    <property type="term" value="F:metal ion binding"/>
    <property type="evidence" value="ECO:0007669"/>
    <property type="project" value="UniProtKB-KW"/>
</dbReference>
<dbReference type="GO" id="GO:0003713">
    <property type="term" value="F:transcription coactivator activity"/>
    <property type="evidence" value="ECO:0000250"/>
    <property type="project" value="UniProtKB"/>
</dbReference>
<dbReference type="GO" id="GO:0031175">
    <property type="term" value="P:neuron projection development"/>
    <property type="evidence" value="ECO:0000315"/>
    <property type="project" value="RGD"/>
</dbReference>
<dbReference type="GO" id="GO:0016579">
    <property type="term" value="P:protein deubiquitination"/>
    <property type="evidence" value="ECO:0000266"/>
    <property type="project" value="RGD"/>
</dbReference>
<dbReference type="GO" id="GO:0006508">
    <property type="term" value="P:proteolysis"/>
    <property type="evidence" value="ECO:0007669"/>
    <property type="project" value="UniProtKB-KW"/>
</dbReference>
<dbReference type="GO" id="GO:0045815">
    <property type="term" value="P:transcription initiation-coupled chromatin remodeling"/>
    <property type="evidence" value="ECO:0000250"/>
    <property type="project" value="UniProtKB"/>
</dbReference>
<dbReference type="CDD" id="cd02674">
    <property type="entry name" value="Peptidase_C19R"/>
    <property type="match status" value="1"/>
</dbReference>
<dbReference type="FunFam" id="3.90.70.10:FF:000058">
    <property type="entry name" value="Ubiquitin carboxyl-terminal hydrolase 21"/>
    <property type="match status" value="1"/>
</dbReference>
<dbReference type="Gene3D" id="3.90.70.10">
    <property type="entry name" value="Cysteine proteinases"/>
    <property type="match status" value="1"/>
</dbReference>
<dbReference type="InterPro" id="IPR038765">
    <property type="entry name" value="Papain-like_cys_pep_sf"/>
</dbReference>
<dbReference type="InterPro" id="IPR001394">
    <property type="entry name" value="Peptidase_C19_UCH"/>
</dbReference>
<dbReference type="InterPro" id="IPR050185">
    <property type="entry name" value="Ub_carboxyl-term_hydrolase"/>
</dbReference>
<dbReference type="InterPro" id="IPR018200">
    <property type="entry name" value="USP_CS"/>
</dbReference>
<dbReference type="InterPro" id="IPR028889">
    <property type="entry name" value="USP_dom"/>
</dbReference>
<dbReference type="PANTHER" id="PTHR21646">
    <property type="entry name" value="UBIQUITIN CARBOXYL-TERMINAL HYDROLASE"/>
    <property type="match status" value="1"/>
</dbReference>
<dbReference type="PANTHER" id="PTHR21646:SF6">
    <property type="entry name" value="UBIQUITIN CARBOXYL-TERMINAL HYDROLASE 21"/>
    <property type="match status" value="1"/>
</dbReference>
<dbReference type="Pfam" id="PF00443">
    <property type="entry name" value="UCH"/>
    <property type="match status" value="1"/>
</dbReference>
<dbReference type="SUPFAM" id="SSF54001">
    <property type="entry name" value="Cysteine proteinases"/>
    <property type="match status" value="1"/>
</dbReference>
<dbReference type="PROSITE" id="PS00972">
    <property type="entry name" value="USP_1"/>
    <property type="match status" value="1"/>
</dbReference>
<dbReference type="PROSITE" id="PS00973">
    <property type="entry name" value="USP_2"/>
    <property type="match status" value="1"/>
</dbReference>
<dbReference type="PROSITE" id="PS50235">
    <property type="entry name" value="USP_3"/>
    <property type="match status" value="1"/>
</dbReference>
<name>UBP21_RAT</name>
<organism>
    <name type="scientific">Rattus norvegicus</name>
    <name type="common">Rat</name>
    <dbReference type="NCBI Taxonomy" id="10116"/>
    <lineage>
        <taxon>Eukaryota</taxon>
        <taxon>Metazoa</taxon>
        <taxon>Chordata</taxon>
        <taxon>Craniata</taxon>
        <taxon>Vertebrata</taxon>
        <taxon>Euteleostomi</taxon>
        <taxon>Mammalia</taxon>
        <taxon>Eutheria</taxon>
        <taxon>Euarchontoglires</taxon>
        <taxon>Glires</taxon>
        <taxon>Rodentia</taxon>
        <taxon>Myomorpha</taxon>
        <taxon>Muroidea</taxon>
        <taxon>Muridae</taxon>
        <taxon>Murinae</taxon>
        <taxon>Rattus</taxon>
    </lineage>
</organism>
<comment type="function">
    <text evidence="1 2">Deubiquitinates histone H2A, a specific tag for epigenetic transcriptional repression, thereby acting as a coactivator. Deubiquitination of histone H2A releaves the repression of di- and trimethylation of histone H3 at 'Lys-4', resulting in regulation of transcriptional initiation. Regulates gene expression via histone H2A deubiquitination (By similarity). Deubiquitinates BAZ2A/TIP5 leading to its stabilization. Also capable of removing NEDD8 from NEDD8 conjugates but has no effect on Sentrin-1 conjugates. Also acts as a negative regulator of the ribosome quality control (RQC) by mediating deubiquitination of 40S ribosomal proteins RPS10/eS10 and RPS20/uS10, thereby antagonizing ZNF598-mediated 40S ubiquitination (By similarity).</text>
</comment>
<comment type="catalytic activity">
    <reaction evidence="2">
        <text>Thiol-dependent hydrolysis of ester, thioester, amide, peptide and isopeptide bonds formed by the C-terminal Gly of ubiquitin (a 76-residue protein attached to proteins as an intracellular targeting signal).</text>
        <dbReference type="EC" id="3.4.19.12"/>
    </reaction>
</comment>
<comment type="subunit">
    <text evidence="2">Interacts with BEND3.</text>
</comment>
<comment type="subcellular location">
    <subcellularLocation>
        <location evidence="2">Cytoplasm</location>
    </subcellularLocation>
    <subcellularLocation>
        <location evidence="2">Nucleus</location>
    </subcellularLocation>
</comment>
<comment type="similarity">
    <text evidence="6">Belongs to the peptidase C19 family. USP21 subfamily.</text>
</comment>
<sequence length="565" mass="62700">MPQASEHRLGRTREPPVNVQPRVGAKIPFPPRARSKERRNPVPGPNSMLRPLPPRPGPPDERLKKLDLGRGRTSGSRPRGPLRADHGVPLPGSPPPTVALPLPSRTNLTRSKSVSSGDLRPMGIALGGHRGTGELGAALSRLALRPEPPTLRRSTSLRRLGGFPGPPTLLSIRTEPPPSHGSFHMISARPSEPFYSDDKMAHHTLLLGSGHVGLRNLGNTCFLNAVLQCLSSTRPLRDFCLRRDFRQEVPGGGRAQELTEAFADVIGALWHPDSCEAVNPTRFRAVFQKYVPSFSGYSQQDAQEFLKLLMERLHLEINRRGRRAPPILASGPVPSPPRRGGALHEEPELSDDDRANLMWKRYLEREDSKIVDLFVGQLKSCLKCQACGYRSTTFEVFCDLSLPIPKKGFAGGKVSLRDCFSLFTKEEELESENAPVCDRCRQKTRSTKKLTVQRFPRILVLHLNRFSTSRGSIKKSSVGVDFPLQRLSLGDFASDKVGSPVYQLYALCNHSGSVHYGHYTALCRCQTGWHVYNDSRVSPVSENQVASSEGYVLFYQLMQEPPRCL</sequence>
<protein>
    <recommendedName>
        <fullName>Ubiquitin carboxyl-terminal hydrolase 21</fullName>
        <ecNumber evidence="2">3.4.19.12</ecNumber>
    </recommendedName>
    <alternativeName>
        <fullName>Deubiquitinating enzyme 21</fullName>
    </alternativeName>
    <alternativeName>
        <fullName>Ubiquitin thioesterase 21</fullName>
    </alternativeName>
    <alternativeName>
        <fullName>Ubiquitin-specific-processing protease 21</fullName>
    </alternativeName>
</protein>
<accession>B2GUX4</accession>